<dbReference type="EMBL" id="CP000814">
    <property type="protein sequence ID" value="ABV52052.1"/>
    <property type="molecule type" value="Genomic_DNA"/>
</dbReference>
<dbReference type="RefSeq" id="WP_002866973.1">
    <property type="nucleotide sequence ID" value="NC_009839.1"/>
</dbReference>
<dbReference type="SMR" id="A8FKR5"/>
<dbReference type="KEGG" id="cju:C8J_0453"/>
<dbReference type="HOGENOM" id="CLU_104295_1_2_7"/>
<dbReference type="GO" id="GO:0015935">
    <property type="term" value="C:small ribosomal subunit"/>
    <property type="evidence" value="ECO:0007669"/>
    <property type="project" value="InterPro"/>
</dbReference>
<dbReference type="GO" id="GO:0019843">
    <property type="term" value="F:rRNA binding"/>
    <property type="evidence" value="ECO:0007669"/>
    <property type="project" value="UniProtKB-UniRule"/>
</dbReference>
<dbReference type="GO" id="GO:0003735">
    <property type="term" value="F:structural constituent of ribosome"/>
    <property type="evidence" value="ECO:0007669"/>
    <property type="project" value="InterPro"/>
</dbReference>
<dbReference type="GO" id="GO:0000049">
    <property type="term" value="F:tRNA binding"/>
    <property type="evidence" value="ECO:0007669"/>
    <property type="project" value="UniProtKB-UniRule"/>
</dbReference>
<dbReference type="GO" id="GO:0006412">
    <property type="term" value="P:translation"/>
    <property type="evidence" value="ECO:0007669"/>
    <property type="project" value="UniProtKB-UniRule"/>
</dbReference>
<dbReference type="CDD" id="cd03368">
    <property type="entry name" value="Ribosomal_S12"/>
    <property type="match status" value="1"/>
</dbReference>
<dbReference type="FunFam" id="2.40.50.140:FF:000001">
    <property type="entry name" value="30S ribosomal protein S12"/>
    <property type="match status" value="1"/>
</dbReference>
<dbReference type="Gene3D" id="2.40.50.140">
    <property type="entry name" value="Nucleic acid-binding proteins"/>
    <property type="match status" value="1"/>
</dbReference>
<dbReference type="HAMAP" id="MF_00403_B">
    <property type="entry name" value="Ribosomal_uS12_B"/>
    <property type="match status" value="1"/>
</dbReference>
<dbReference type="InterPro" id="IPR012340">
    <property type="entry name" value="NA-bd_OB-fold"/>
</dbReference>
<dbReference type="InterPro" id="IPR006032">
    <property type="entry name" value="Ribosomal_uS12"/>
</dbReference>
<dbReference type="InterPro" id="IPR005679">
    <property type="entry name" value="Ribosomal_uS12_bac"/>
</dbReference>
<dbReference type="NCBIfam" id="TIGR00981">
    <property type="entry name" value="rpsL_bact"/>
    <property type="match status" value="1"/>
</dbReference>
<dbReference type="PANTHER" id="PTHR11652">
    <property type="entry name" value="30S RIBOSOMAL PROTEIN S12 FAMILY MEMBER"/>
    <property type="match status" value="1"/>
</dbReference>
<dbReference type="Pfam" id="PF00164">
    <property type="entry name" value="Ribosom_S12_S23"/>
    <property type="match status" value="1"/>
</dbReference>
<dbReference type="PIRSF" id="PIRSF002133">
    <property type="entry name" value="Ribosomal_S12/S23"/>
    <property type="match status" value="1"/>
</dbReference>
<dbReference type="PRINTS" id="PR01034">
    <property type="entry name" value="RIBOSOMALS12"/>
</dbReference>
<dbReference type="SUPFAM" id="SSF50249">
    <property type="entry name" value="Nucleic acid-binding proteins"/>
    <property type="match status" value="1"/>
</dbReference>
<dbReference type="PROSITE" id="PS00055">
    <property type="entry name" value="RIBOSOMAL_S12"/>
    <property type="match status" value="1"/>
</dbReference>
<accession>A8FKR5</accession>
<protein>
    <recommendedName>
        <fullName evidence="2">Small ribosomal subunit protein uS12</fullName>
    </recommendedName>
    <alternativeName>
        <fullName evidence="3">30S ribosomal protein S12</fullName>
    </alternativeName>
</protein>
<sequence length="128" mass="14076">MPTINQLVRKERKKVLEKSKSPALKNCPQRRGVCTRVYTTTPKKPNSALRKVAKVRLTSGFEVISYIGGEGHNLQEHSIVLVRGGRVKDLPGVKYHIVRGALDTAGVAKRTVSRSKYGAKRPKAGTAK</sequence>
<keyword id="KW-0488">Methylation</keyword>
<keyword id="KW-0687">Ribonucleoprotein</keyword>
<keyword id="KW-0689">Ribosomal protein</keyword>
<keyword id="KW-0694">RNA-binding</keyword>
<keyword id="KW-0699">rRNA-binding</keyword>
<keyword id="KW-0820">tRNA-binding</keyword>
<evidence type="ECO:0000250" key="1"/>
<evidence type="ECO:0000255" key="2">
    <source>
        <dbReference type="HAMAP-Rule" id="MF_00403"/>
    </source>
</evidence>
<evidence type="ECO:0000305" key="3"/>
<name>RS12_CAMJ8</name>
<reference key="1">
    <citation type="journal article" date="2007" name="J. Bacteriol.">
        <title>The complete genome sequence of Campylobacter jejuni strain 81116 (NCTC11828).</title>
        <authorList>
            <person name="Pearson B.M."/>
            <person name="Gaskin D.J.H."/>
            <person name="Segers R.P.A.M."/>
            <person name="Wells J.M."/>
            <person name="Nuijten P.J.M."/>
            <person name="van Vliet A.H.M."/>
        </authorList>
    </citation>
    <scope>NUCLEOTIDE SEQUENCE [LARGE SCALE GENOMIC DNA]</scope>
    <source>
        <strain>81116 / NCTC 11828</strain>
    </source>
</reference>
<gene>
    <name evidence="2" type="primary">rpsL</name>
    <name type="ordered locus">C8J_0453</name>
</gene>
<feature type="chain" id="PRO_1000072254" description="Small ribosomal subunit protein uS12">
    <location>
        <begin position="1"/>
        <end position="128"/>
    </location>
</feature>
<feature type="modified residue" description="3-methylthioaspartic acid" evidence="1">
    <location>
        <position position="89"/>
    </location>
</feature>
<proteinExistence type="inferred from homology"/>
<comment type="function">
    <text evidence="2">With S4 and S5 plays an important role in translational accuracy.</text>
</comment>
<comment type="function">
    <text evidence="2">Interacts with and stabilizes bases of the 16S rRNA that are involved in tRNA selection in the A site and with the mRNA backbone. Located at the interface of the 30S and 50S subunits, it traverses the body of the 30S subunit contacting proteins on the other side and probably holding the rRNA structure together. The combined cluster of proteins S8, S12 and S17 appears to hold together the shoulder and platform of the 30S subunit.</text>
</comment>
<comment type="subunit">
    <text evidence="2">Part of the 30S ribosomal subunit. Contacts proteins S8 and S17. May interact with IF1 in the 30S initiation complex.</text>
</comment>
<comment type="similarity">
    <text evidence="2">Belongs to the universal ribosomal protein uS12 family.</text>
</comment>
<organism>
    <name type="scientific">Campylobacter jejuni subsp. jejuni serotype O:6 (strain 81116 / NCTC 11828)</name>
    <dbReference type="NCBI Taxonomy" id="407148"/>
    <lineage>
        <taxon>Bacteria</taxon>
        <taxon>Pseudomonadati</taxon>
        <taxon>Campylobacterota</taxon>
        <taxon>Epsilonproteobacteria</taxon>
        <taxon>Campylobacterales</taxon>
        <taxon>Campylobacteraceae</taxon>
        <taxon>Campylobacter</taxon>
    </lineage>
</organism>